<accession>A1JNX2</accession>
<dbReference type="EC" id="1.5.1.5" evidence="1"/>
<dbReference type="EC" id="3.5.4.9" evidence="1"/>
<dbReference type="EMBL" id="AM286415">
    <property type="protein sequence ID" value="CAL13082.1"/>
    <property type="molecule type" value="Genomic_DNA"/>
</dbReference>
<dbReference type="RefSeq" id="WP_011816853.1">
    <property type="nucleotide sequence ID" value="NC_008800.1"/>
</dbReference>
<dbReference type="RefSeq" id="YP_001007229.1">
    <property type="nucleotide sequence ID" value="NC_008800.1"/>
</dbReference>
<dbReference type="SMR" id="A1JNX2"/>
<dbReference type="GeneID" id="93971731"/>
<dbReference type="KEGG" id="yen:YE3045"/>
<dbReference type="PATRIC" id="fig|393305.7.peg.3241"/>
<dbReference type="eggNOG" id="COG0190">
    <property type="taxonomic scope" value="Bacteria"/>
</dbReference>
<dbReference type="HOGENOM" id="CLU_034045_2_1_6"/>
<dbReference type="OrthoDB" id="9803580at2"/>
<dbReference type="UniPathway" id="UPA00193"/>
<dbReference type="Proteomes" id="UP000000642">
    <property type="component" value="Chromosome"/>
</dbReference>
<dbReference type="GO" id="GO:0005829">
    <property type="term" value="C:cytosol"/>
    <property type="evidence" value="ECO:0007669"/>
    <property type="project" value="TreeGrafter"/>
</dbReference>
<dbReference type="GO" id="GO:0004477">
    <property type="term" value="F:methenyltetrahydrofolate cyclohydrolase activity"/>
    <property type="evidence" value="ECO:0007669"/>
    <property type="project" value="UniProtKB-UniRule"/>
</dbReference>
<dbReference type="GO" id="GO:0004488">
    <property type="term" value="F:methylenetetrahydrofolate dehydrogenase (NADP+) activity"/>
    <property type="evidence" value="ECO:0007669"/>
    <property type="project" value="UniProtKB-UniRule"/>
</dbReference>
<dbReference type="GO" id="GO:0000105">
    <property type="term" value="P:L-histidine biosynthetic process"/>
    <property type="evidence" value="ECO:0007669"/>
    <property type="project" value="UniProtKB-KW"/>
</dbReference>
<dbReference type="GO" id="GO:0009086">
    <property type="term" value="P:methionine biosynthetic process"/>
    <property type="evidence" value="ECO:0007669"/>
    <property type="project" value="UniProtKB-KW"/>
</dbReference>
<dbReference type="GO" id="GO:0006164">
    <property type="term" value="P:purine nucleotide biosynthetic process"/>
    <property type="evidence" value="ECO:0007669"/>
    <property type="project" value="UniProtKB-KW"/>
</dbReference>
<dbReference type="GO" id="GO:0035999">
    <property type="term" value="P:tetrahydrofolate interconversion"/>
    <property type="evidence" value="ECO:0007669"/>
    <property type="project" value="UniProtKB-UniRule"/>
</dbReference>
<dbReference type="CDD" id="cd01080">
    <property type="entry name" value="NAD_bind_m-THF_DH_Cyclohyd"/>
    <property type="match status" value="1"/>
</dbReference>
<dbReference type="FunFam" id="3.40.50.10860:FF:000001">
    <property type="entry name" value="Bifunctional protein FolD"/>
    <property type="match status" value="1"/>
</dbReference>
<dbReference type="FunFam" id="3.40.50.720:FF:000006">
    <property type="entry name" value="Bifunctional protein FolD"/>
    <property type="match status" value="1"/>
</dbReference>
<dbReference type="Gene3D" id="3.40.50.10860">
    <property type="entry name" value="Leucine Dehydrogenase, chain A, domain 1"/>
    <property type="match status" value="1"/>
</dbReference>
<dbReference type="Gene3D" id="3.40.50.720">
    <property type="entry name" value="NAD(P)-binding Rossmann-like Domain"/>
    <property type="match status" value="1"/>
</dbReference>
<dbReference type="HAMAP" id="MF_01576">
    <property type="entry name" value="THF_DHG_CYH"/>
    <property type="match status" value="1"/>
</dbReference>
<dbReference type="InterPro" id="IPR046346">
    <property type="entry name" value="Aminoacid_DH-like_N_sf"/>
</dbReference>
<dbReference type="InterPro" id="IPR036291">
    <property type="entry name" value="NAD(P)-bd_dom_sf"/>
</dbReference>
<dbReference type="InterPro" id="IPR000672">
    <property type="entry name" value="THF_DH/CycHdrlase"/>
</dbReference>
<dbReference type="InterPro" id="IPR020630">
    <property type="entry name" value="THF_DH/CycHdrlase_cat_dom"/>
</dbReference>
<dbReference type="InterPro" id="IPR020867">
    <property type="entry name" value="THF_DH/CycHdrlase_CS"/>
</dbReference>
<dbReference type="InterPro" id="IPR020631">
    <property type="entry name" value="THF_DH/CycHdrlase_NAD-bd_dom"/>
</dbReference>
<dbReference type="NCBIfam" id="NF008058">
    <property type="entry name" value="PRK10792.1"/>
    <property type="match status" value="1"/>
</dbReference>
<dbReference type="NCBIfam" id="NF010783">
    <property type="entry name" value="PRK14186.1"/>
    <property type="match status" value="1"/>
</dbReference>
<dbReference type="PANTHER" id="PTHR48099:SF5">
    <property type="entry name" value="C-1-TETRAHYDROFOLATE SYNTHASE, CYTOPLASMIC"/>
    <property type="match status" value="1"/>
</dbReference>
<dbReference type="PANTHER" id="PTHR48099">
    <property type="entry name" value="C-1-TETRAHYDROFOLATE SYNTHASE, CYTOPLASMIC-RELATED"/>
    <property type="match status" value="1"/>
</dbReference>
<dbReference type="Pfam" id="PF00763">
    <property type="entry name" value="THF_DHG_CYH"/>
    <property type="match status" value="1"/>
</dbReference>
<dbReference type="Pfam" id="PF02882">
    <property type="entry name" value="THF_DHG_CYH_C"/>
    <property type="match status" value="1"/>
</dbReference>
<dbReference type="PRINTS" id="PR00085">
    <property type="entry name" value="THFDHDRGNASE"/>
</dbReference>
<dbReference type="SUPFAM" id="SSF53223">
    <property type="entry name" value="Aminoacid dehydrogenase-like, N-terminal domain"/>
    <property type="match status" value="1"/>
</dbReference>
<dbReference type="SUPFAM" id="SSF51735">
    <property type="entry name" value="NAD(P)-binding Rossmann-fold domains"/>
    <property type="match status" value="1"/>
</dbReference>
<dbReference type="PROSITE" id="PS00766">
    <property type="entry name" value="THF_DHG_CYH_1"/>
    <property type="match status" value="1"/>
</dbReference>
<dbReference type="PROSITE" id="PS00767">
    <property type="entry name" value="THF_DHG_CYH_2"/>
    <property type="match status" value="1"/>
</dbReference>
<sequence>MSAKIIDGKTIAQQVRNEVAALVQKRLAAGKRAPGLAVVLVGENPASQIYVASKRKACEEVGFVSRSYDLPMTTTEAELLALIDSLNNDSEIDGILVQLPLPAGIDNVKVLEHIHPDKDVDGFHPYNVGRLCQRAPKLRPCTPRGIVTLLERYDIPTYGLNAVVVGASNIVGRPMSLELLLAGCTTTVTHRFTKNLRQHVENADLLVVAVGKPGFIPGEWIKPGAIVIDVGINRLESGKVVGDVEFDVAVERAGWITPVPGGVGPMTVATLIQNTLQACEEYHDINENRVKGQ</sequence>
<proteinExistence type="inferred from homology"/>
<name>FOLD_YERE8</name>
<evidence type="ECO:0000255" key="1">
    <source>
        <dbReference type="HAMAP-Rule" id="MF_01576"/>
    </source>
</evidence>
<gene>
    <name evidence="1" type="primary">folD</name>
    <name type="ordered locus">YE3045</name>
</gene>
<organism>
    <name type="scientific">Yersinia enterocolitica serotype O:8 / biotype 1B (strain NCTC 13174 / 8081)</name>
    <dbReference type="NCBI Taxonomy" id="393305"/>
    <lineage>
        <taxon>Bacteria</taxon>
        <taxon>Pseudomonadati</taxon>
        <taxon>Pseudomonadota</taxon>
        <taxon>Gammaproteobacteria</taxon>
        <taxon>Enterobacterales</taxon>
        <taxon>Yersiniaceae</taxon>
        <taxon>Yersinia</taxon>
    </lineage>
</organism>
<feature type="chain" id="PRO_0000305894" description="Bifunctional protein FolD">
    <location>
        <begin position="1"/>
        <end position="293"/>
    </location>
</feature>
<feature type="binding site" evidence="1">
    <location>
        <begin position="166"/>
        <end position="168"/>
    </location>
    <ligand>
        <name>NADP(+)</name>
        <dbReference type="ChEBI" id="CHEBI:58349"/>
    </ligand>
</feature>
<feature type="binding site" evidence="1">
    <location>
        <position position="232"/>
    </location>
    <ligand>
        <name>NADP(+)</name>
        <dbReference type="ChEBI" id="CHEBI:58349"/>
    </ligand>
</feature>
<comment type="function">
    <text evidence="1">Catalyzes the oxidation of 5,10-methylenetetrahydrofolate to 5,10-methenyltetrahydrofolate and then the hydrolysis of 5,10-methenyltetrahydrofolate to 10-formyltetrahydrofolate.</text>
</comment>
<comment type="catalytic activity">
    <reaction evidence="1">
        <text>(6R)-5,10-methylene-5,6,7,8-tetrahydrofolate + NADP(+) = (6R)-5,10-methenyltetrahydrofolate + NADPH</text>
        <dbReference type="Rhea" id="RHEA:22812"/>
        <dbReference type="ChEBI" id="CHEBI:15636"/>
        <dbReference type="ChEBI" id="CHEBI:57455"/>
        <dbReference type="ChEBI" id="CHEBI:57783"/>
        <dbReference type="ChEBI" id="CHEBI:58349"/>
        <dbReference type="EC" id="1.5.1.5"/>
    </reaction>
</comment>
<comment type="catalytic activity">
    <reaction evidence="1">
        <text>(6R)-5,10-methenyltetrahydrofolate + H2O = (6R)-10-formyltetrahydrofolate + H(+)</text>
        <dbReference type="Rhea" id="RHEA:23700"/>
        <dbReference type="ChEBI" id="CHEBI:15377"/>
        <dbReference type="ChEBI" id="CHEBI:15378"/>
        <dbReference type="ChEBI" id="CHEBI:57455"/>
        <dbReference type="ChEBI" id="CHEBI:195366"/>
        <dbReference type="EC" id="3.5.4.9"/>
    </reaction>
</comment>
<comment type="pathway">
    <text evidence="1">One-carbon metabolism; tetrahydrofolate interconversion.</text>
</comment>
<comment type="subunit">
    <text evidence="1">Homodimer.</text>
</comment>
<comment type="similarity">
    <text evidence="1">Belongs to the tetrahydrofolate dehydrogenase/cyclohydrolase family.</text>
</comment>
<reference key="1">
    <citation type="journal article" date="2006" name="PLoS Genet.">
        <title>The complete genome sequence and comparative genome analysis of the high pathogenicity Yersinia enterocolitica strain 8081.</title>
        <authorList>
            <person name="Thomson N.R."/>
            <person name="Howard S."/>
            <person name="Wren B.W."/>
            <person name="Holden M.T.G."/>
            <person name="Crossman L."/>
            <person name="Challis G.L."/>
            <person name="Churcher C."/>
            <person name="Mungall K."/>
            <person name="Brooks K."/>
            <person name="Chillingworth T."/>
            <person name="Feltwell T."/>
            <person name="Abdellah Z."/>
            <person name="Hauser H."/>
            <person name="Jagels K."/>
            <person name="Maddison M."/>
            <person name="Moule S."/>
            <person name="Sanders M."/>
            <person name="Whitehead S."/>
            <person name="Quail M.A."/>
            <person name="Dougan G."/>
            <person name="Parkhill J."/>
            <person name="Prentice M.B."/>
        </authorList>
    </citation>
    <scope>NUCLEOTIDE SEQUENCE [LARGE SCALE GENOMIC DNA]</scope>
    <source>
        <strain>NCTC 13174 / 8081</strain>
    </source>
</reference>
<protein>
    <recommendedName>
        <fullName evidence="1">Bifunctional protein FolD</fullName>
    </recommendedName>
    <domain>
        <recommendedName>
            <fullName evidence="1">Methylenetetrahydrofolate dehydrogenase</fullName>
            <ecNumber evidence="1">1.5.1.5</ecNumber>
        </recommendedName>
    </domain>
    <domain>
        <recommendedName>
            <fullName evidence="1">Methenyltetrahydrofolate cyclohydrolase</fullName>
            <ecNumber evidence="1">3.5.4.9</ecNumber>
        </recommendedName>
    </domain>
</protein>
<keyword id="KW-0028">Amino-acid biosynthesis</keyword>
<keyword id="KW-0368">Histidine biosynthesis</keyword>
<keyword id="KW-0378">Hydrolase</keyword>
<keyword id="KW-0486">Methionine biosynthesis</keyword>
<keyword id="KW-0511">Multifunctional enzyme</keyword>
<keyword id="KW-0521">NADP</keyword>
<keyword id="KW-0554">One-carbon metabolism</keyword>
<keyword id="KW-0560">Oxidoreductase</keyword>
<keyword id="KW-0658">Purine biosynthesis</keyword>